<organism>
    <name type="scientific">Coccidioides immitis (strain RS)</name>
    <name type="common">Valley fever fungus</name>
    <dbReference type="NCBI Taxonomy" id="246410"/>
    <lineage>
        <taxon>Eukaryota</taxon>
        <taxon>Fungi</taxon>
        <taxon>Dikarya</taxon>
        <taxon>Ascomycota</taxon>
        <taxon>Pezizomycotina</taxon>
        <taxon>Eurotiomycetes</taxon>
        <taxon>Eurotiomycetidae</taxon>
        <taxon>Onygenales</taxon>
        <taxon>Onygenaceae</taxon>
        <taxon>Coccidioides</taxon>
    </lineage>
</organism>
<reference key="1">
    <citation type="journal article" date="2009" name="Genome Res.">
        <title>Comparative genomic analyses of the human fungal pathogens Coccidioides and their relatives.</title>
        <authorList>
            <person name="Sharpton T.J."/>
            <person name="Stajich J.E."/>
            <person name="Rounsley S.D."/>
            <person name="Gardner M.J."/>
            <person name="Wortman J.R."/>
            <person name="Jordar V.S."/>
            <person name="Maiti R."/>
            <person name="Kodira C.D."/>
            <person name="Neafsey D.E."/>
            <person name="Zeng Q."/>
            <person name="Hung C.-Y."/>
            <person name="McMahan C."/>
            <person name="Muszewska A."/>
            <person name="Grynberg M."/>
            <person name="Mandel M.A."/>
            <person name="Kellner E.M."/>
            <person name="Barker B.M."/>
            <person name="Galgiani J.N."/>
            <person name="Orbach M.J."/>
            <person name="Kirkland T.N."/>
            <person name="Cole G.T."/>
            <person name="Henn M.R."/>
            <person name="Birren B.W."/>
            <person name="Taylor J.W."/>
        </authorList>
    </citation>
    <scope>NUCLEOTIDE SEQUENCE [LARGE SCALE GENOMIC DNA]</scope>
    <source>
        <strain>RS</strain>
    </source>
</reference>
<reference key="2">
    <citation type="journal article" date="2010" name="Genome Res.">
        <title>Population genomic sequencing of Coccidioides fungi reveals recent hybridization and transposon control.</title>
        <authorList>
            <person name="Neafsey D.E."/>
            <person name="Barker B.M."/>
            <person name="Sharpton T.J."/>
            <person name="Stajich J.E."/>
            <person name="Park D.J."/>
            <person name="Whiston E."/>
            <person name="Hung C.-Y."/>
            <person name="McMahan C."/>
            <person name="White J."/>
            <person name="Sykes S."/>
            <person name="Heiman D."/>
            <person name="Young S."/>
            <person name="Zeng Q."/>
            <person name="Abouelleil A."/>
            <person name="Aftuck L."/>
            <person name="Bessette D."/>
            <person name="Brown A."/>
            <person name="FitzGerald M."/>
            <person name="Lui A."/>
            <person name="Macdonald J.P."/>
            <person name="Priest M."/>
            <person name="Orbach M.J."/>
            <person name="Galgiani J.N."/>
            <person name="Kirkland T.N."/>
            <person name="Cole G.T."/>
            <person name="Birren B.W."/>
            <person name="Henn M.R."/>
            <person name="Taylor J.W."/>
            <person name="Rounsley S.D."/>
        </authorList>
    </citation>
    <scope>GENOME REANNOTATION</scope>
    <source>
        <strain>RS</strain>
    </source>
</reference>
<name>G3P_COCIM</name>
<proteinExistence type="inferred from homology"/>
<evidence type="ECO:0000250" key="1"/>
<evidence type="ECO:0000255" key="2">
    <source>
        <dbReference type="PROSITE-ProRule" id="PRU10009"/>
    </source>
</evidence>
<evidence type="ECO:0000305" key="3"/>
<keyword id="KW-0963">Cytoplasm</keyword>
<keyword id="KW-0324">Glycolysis</keyword>
<keyword id="KW-0520">NAD</keyword>
<keyword id="KW-0560">Oxidoreductase</keyword>
<keyword id="KW-1185">Reference proteome</keyword>
<accession>Q1DTF9</accession>
<accession>J3K8N1</accession>
<feature type="chain" id="PRO_0000252285" description="Glyceraldehyde-3-phosphate dehydrogenase">
    <location>
        <begin position="1"/>
        <end position="337"/>
    </location>
</feature>
<feature type="active site" description="Nucleophile" evidence="2">
    <location>
        <position position="151"/>
    </location>
</feature>
<feature type="binding site" evidence="1">
    <location>
        <begin position="12"/>
        <end position="13"/>
    </location>
    <ligand>
        <name>NAD(+)</name>
        <dbReference type="ChEBI" id="CHEBI:57540"/>
    </ligand>
</feature>
<feature type="binding site" evidence="1">
    <location>
        <position position="34"/>
    </location>
    <ligand>
        <name>NAD(+)</name>
        <dbReference type="ChEBI" id="CHEBI:57540"/>
    </ligand>
</feature>
<feature type="binding site" evidence="1">
    <location>
        <position position="79"/>
    </location>
    <ligand>
        <name>NAD(+)</name>
        <dbReference type="ChEBI" id="CHEBI:57540"/>
    </ligand>
</feature>
<feature type="binding site" evidence="1">
    <location>
        <begin position="150"/>
        <end position="152"/>
    </location>
    <ligand>
        <name>D-glyceraldehyde 3-phosphate</name>
        <dbReference type="ChEBI" id="CHEBI:59776"/>
    </ligand>
</feature>
<feature type="binding site" evidence="1">
    <location>
        <position position="181"/>
    </location>
    <ligand>
        <name>D-glyceraldehyde 3-phosphate</name>
        <dbReference type="ChEBI" id="CHEBI:59776"/>
    </ligand>
</feature>
<feature type="binding site" evidence="1">
    <location>
        <begin position="210"/>
        <end position="211"/>
    </location>
    <ligand>
        <name>D-glyceraldehyde 3-phosphate</name>
        <dbReference type="ChEBI" id="CHEBI:59776"/>
    </ligand>
</feature>
<feature type="binding site" evidence="1">
    <location>
        <position position="233"/>
    </location>
    <ligand>
        <name>D-glyceraldehyde 3-phosphate</name>
        <dbReference type="ChEBI" id="CHEBI:59776"/>
    </ligand>
</feature>
<feature type="binding site" evidence="1">
    <location>
        <position position="315"/>
    </location>
    <ligand>
        <name>NAD(+)</name>
        <dbReference type="ChEBI" id="CHEBI:57540"/>
    </ligand>
</feature>
<feature type="site" description="Activates thiol group during catalysis" evidence="1">
    <location>
        <position position="178"/>
    </location>
</feature>
<gene>
    <name type="primary">GPD</name>
    <name type="ORF">CIMG_06404</name>
</gene>
<comment type="catalytic activity">
    <reaction evidence="2">
        <text>D-glyceraldehyde 3-phosphate + phosphate + NAD(+) = (2R)-3-phospho-glyceroyl phosphate + NADH + H(+)</text>
        <dbReference type="Rhea" id="RHEA:10300"/>
        <dbReference type="ChEBI" id="CHEBI:15378"/>
        <dbReference type="ChEBI" id="CHEBI:43474"/>
        <dbReference type="ChEBI" id="CHEBI:57540"/>
        <dbReference type="ChEBI" id="CHEBI:57604"/>
        <dbReference type="ChEBI" id="CHEBI:57945"/>
        <dbReference type="ChEBI" id="CHEBI:59776"/>
        <dbReference type="EC" id="1.2.1.12"/>
    </reaction>
</comment>
<comment type="pathway">
    <text>Carbohydrate degradation; glycolysis; pyruvate from D-glyceraldehyde 3-phosphate: step 1/5.</text>
</comment>
<comment type="subunit">
    <text evidence="1">Homotetramer.</text>
</comment>
<comment type="subcellular location">
    <subcellularLocation>
        <location evidence="1">Cytoplasm</location>
    </subcellularLocation>
</comment>
<comment type="similarity">
    <text evidence="3">Belongs to the glyceraldehyde-3-phosphate dehydrogenase family.</text>
</comment>
<dbReference type="EC" id="1.2.1.12"/>
<dbReference type="EMBL" id="GG704912">
    <property type="protein sequence ID" value="EAS30925.3"/>
    <property type="molecule type" value="Genomic_DNA"/>
</dbReference>
<dbReference type="RefSeq" id="XP_001242508.1">
    <property type="nucleotide sequence ID" value="XM_001242507.2"/>
</dbReference>
<dbReference type="SMR" id="Q1DTF9"/>
<dbReference type="FunCoup" id="Q1DTF9">
    <property type="interactions" value="1098"/>
</dbReference>
<dbReference type="STRING" id="246410.Q1DTF9"/>
<dbReference type="GeneID" id="4561076"/>
<dbReference type="KEGG" id="cim:CIMG_06404"/>
<dbReference type="VEuPathDB" id="FungiDB:CIMG_06404"/>
<dbReference type="InParanoid" id="Q1DTF9"/>
<dbReference type="OMA" id="YGYTCNM"/>
<dbReference type="OrthoDB" id="1152826at2759"/>
<dbReference type="UniPathway" id="UPA00109">
    <property type="reaction ID" value="UER00184"/>
</dbReference>
<dbReference type="Proteomes" id="UP000001261">
    <property type="component" value="Unassembled WGS sequence"/>
</dbReference>
<dbReference type="GO" id="GO:0005829">
    <property type="term" value="C:cytosol"/>
    <property type="evidence" value="ECO:0007669"/>
    <property type="project" value="TreeGrafter"/>
</dbReference>
<dbReference type="GO" id="GO:0004365">
    <property type="term" value="F:glyceraldehyde-3-phosphate dehydrogenase (NAD+) (phosphorylating) activity"/>
    <property type="evidence" value="ECO:0007669"/>
    <property type="project" value="UniProtKB-EC"/>
</dbReference>
<dbReference type="GO" id="GO:0051287">
    <property type="term" value="F:NAD binding"/>
    <property type="evidence" value="ECO:0007669"/>
    <property type="project" value="InterPro"/>
</dbReference>
<dbReference type="GO" id="GO:0050661">
    <property type="term" value="F:NADP binding"/>
    <property type="evidence" value="ECO:0007669"/>
    <property type="project" value="InterPro"/>
</dbReference>
<dbReference type="GO" id="GO:0006006">
    <property type="term" value="P:glucose metabolic process"/>
    <property type="evidence" value="ECO:0007669"/>
    <property type="project" value="InterPro"/>
</dbReference>
<dbReference type="GO" id="GO:0006096">
    <property type="term" value="P:glycolytic process"/>
    <property type="evidence" value="ECO:0007669"/>
    <property type="project" value="UniProtKB-UniPathway"/>
</dbReference>
<dbReference type="CDD" id="cd18126">
    <property type="entry name" value="GAPDH_I_C"/>
    <property type="match status" value="1"/>
</dbReference>
<dbReference type="CDD" id="cd05214">
    <property type="entry name" value="GAPDH_I_N"/>
    <property type="match status" value="1"/>
</dbReference>
<dbReference type="FunFam" id="3.30.360.10:FF:000001">
    <property type="entry name" value="Glyceraldehyde-3-phosphate dehydrogenase"/>
    <property type="match status" value="1"/>
</dbReference>
<dbReference type="FunFam" id="3.40.50.720:FF:000020">
    <property type="entry name" value="Glyceraldehyde-3-phosphate dehydrogenase"/>
    <property type="match status" value="1"/>
</dbReference>
<dbReference type="Gene3D" id="3.30.360.10">
    <property type="entry name" value="Dihydrodipicolinate Reductase, domain 2"/>
    <property type="match status" value="1"/>
</dbReference>
<dbReference type="Gene3D" id="3.40.50.720">
    <property type="entry name" value="NAD(P)-binding Rossmann-like Domain"/>
    <property type="match status" value="1"/>
</dbReference>
<dbReference type="InterPro" id="IPR020831">
    <property type="entry name" value="GlycerAld/Erythrose_P_DH"/>
</dbReference>
<dbReference type="InterPro" id="IPR020830">
    <property type="entry name" value="GlycerAld_3-P_DH_AS"/>
</dbReference>
<dbReference type="InterPro" id="IPR020829">
    <property type="entry name" value="GlycerAld_3-P_DH_cat"/>
</dbReference>
<dbReference type="InterPro" id="IPR020828">
    <property type="entry name" value="GlycerAld_3-P_DH_NAD(P)-bd"/>
</dbReference>
<dbReference type="InterPro" id="IPR006424">
    <property type="entry name" value="Glyceraldehyde-3-P_DH_1"/>
</dbReference>
<dbReference type="InterPro" id="IPR036291">
    <property type="entry name" value="NAD(P)-bd_dom_sf"/>
</dbReference>
<dbReference type="NCBIfam" id="TIGR01534">
    <property type="entry name" value="GAPDH-I"/>
    <property type="match status" value="1"/>
</dbReference>
<dbReference type="PANTHER" id="PTHR10836">
    <property type="entry name" value="GLYCERALDEHYDE 3-PHOSPHATE DEHYDROGENASE"/>
    <property type="match status" value="1"/>
</dbReference>
<dbReference type="PANTHER" id="PTHR10836:SF76">
    <property type="entry name" value="GLYCERALDEHYDE-3-PHOSPHATE DEHYDROGENASE-RELATED"/>
    <property type="match status" value="1"/>
</dbReference>
<dbReference type="Pfam" id="PF02800">
    <property type="entry name" value="Gp_dh_C"/>
    <property type="match status" value="1"/>
</dbReference>
<dbReference type="Pfam" id="PF00044">
    <property type="entry name" value="Gp_dh_N"/>
    <property type="match status" value="1"/>
</dbReference>
<dbReference type="PIRSF" id="PIRSF000149">
    <property type="entry name" value="GAP_DH"/>
    <property type="match status" value="1"/>
</dbReference>
<dbReference type="PRINTS" id="PR00078">
    <property type="entry name" value="G3PDHDRGNASE"/>
</dbReference>
<dbReference type="SMART" id="SM00846">
    <property type="entry name" value="Gp_dh_N"/>
    <property type="match status" value="1"/>
</dbReference>
<dbReference type="SUPFAM" id="SSF55347">
    <property type="entry name" value="Glyceraldehyde-3-phosphate dehydrogenase-like, C-terminal domain"/>
    <property type="match status" value="1"/>
</dbReference>
<dbReference type="SUPFAM" id="SSF51735">
    <property type="entry name" value="NAD(P)-binding Rossmann-fold domains"/>
    <property type="match status" value="1"/>
</dbReference>
<dbReference type="PROSITE" id="PS00071">
    <property type="entry name" value="GAPDH"/>
    <property type="match status" value="1"/>
</dbReference>
<sequence>MVVKVGINGFGRIGRIVFRNAVEHPEVEIVAVNDPFIETHYAAYMLKYDSTHGRFKGDVKFSDNGLDVDGKHVRFYQERDPANIPWAETGADYVIESTGVFTTTEKASAHLKGGAKKVIISAPSADAPMFVMGVNNETYKSDIKVLSNASCTTNCLAPLAKVVNDNFGLVEGLMTTVHSYTATQKTVDGPSSKDWRGGRAAAQNIIPSSTGAAKAVGKVIPSLNGKLTGMSMRVPTSNVSVVDLTCRTDKSVTYDQIKEAMKKASANELKGIMSYSEDALVSSDLNGDTHSCIFDATAGIALNDHFIKLVAWYDNEWGYSRRVIDLIAYIAGVDAGK</sequence>
<protein>
    <recommendedName>
        <fullName>Glyceraldehyde-3-phosphate dehydrogenase</fullName>
        <shortName>GAPDH</shortName>
        <ecNumber>1.2.1.12</ecNumber>
    </recommendedName>
</protein>